<feature type="chain" id="PRO_0000120570" description="Protein HesA">
    <location>
        <begin position="1"/>
        <end position="252"/>
    </location>
</feature>
<feature type="sequence conflict" description="In Ref. 1; CAA33558." evidence="1" ref="1">
    <original>APWRYAQSNSMETSSNCTHS</original>
    <variation>RLGDMHNPIQWKPAVIAHIVDTNANHYKHHTLKT</variation>
    <location>
        <begin position="233"/>
        <end position="252"/>
    </location>
</feature>
<dbReference type="EMBL" id="X15553">
    <property type="protein sequence ID" value="CAA33558.1"/>
    <property type="molecule type" value="Genomic_DNA"/>
</dbReference>
<dbReference type="EMBL" id="BA000019">
    <property type="protein sequence ID" value="BAB73389.1"/>
    <property type="molecule type" value="Genomic_DNA"/>
</dbReference>
<dbReference type="PIR" id="AE1985">
    <property type="entry name" value="AE1985"/>
</dbReference>
<dbReference type="PIR" id="S11900">
    <property type="entry name" value="S11900"/>
</dbReference>
<dbReference type="SMR" id="P18500"/>
<dbReference type="STRING" id="103690.gene:10493447"/>
<dbReference type="KEGG" id="ana:all1432"/>
<dbReference type="eggNOG" id="COG0476">
    <property type="taxonomic scope" value="Bacteria"/>
</dbReference>
<dbReference type="Proteomes" id="UP000002483">
    <property type="component" value="Chromosome"/>
</dbReference>
<dbReference type="GO" id="GO:0005737">
    <property type="term" value="C:cytoplasm"/>
    <property type="evidence" value="ECO:0007669"/>
    <property type="project" value="TreeGrafter"/>
</dbReference>
<dbReference type="GO" id="GO:0016779">
    <property type="term" value="F:nucleotidyltransferase activity"/>
    <property type="evidence" value="ECO:0007669"/>
    <property type="project" value="TreeGrafter"/>
</dbReference>
<dbReference type="GO" id="GO:0004792">
    <property type="term" value="F:thiosulfate-cyanide sulfurtransferase activity"/>
    <property type="evidence" value="ECO:0007669"/>
    <property type="project" value="TreeGrafter"/>
</dbReference>
<dbReference type="GO" id="GO:0008641">
    <property type="term" value="F:ubiquitin-like modifier activating enzyme activity"/>
    <property type="evidence" value="ECO:0007669"/>
    <property type="project" value="InterPro"/>
</dbReference>
<dbReference type="GO" id="GO:0009399">
    <property type="term" value="P:nitrogen fixation"/>
    <property type="evidence" value="ECO:0007669"/>
    <property type="project" value="UniProtKB-KW"/>
</dbReference>
<dbReference type="CDD" id="cd00757">
    <property type="entry name" value="ThiF_MoeB_HesA_family"/>
    <property type="match status" value="1"/>
</dbReference>
<dbReference type="Gene3D" id="3.40.50.720">
    <property type="entry name" value="NAD(P)-binding Rossmann-like Domain"/>
    <property type="match status" value="1"/>
</dbReference>
<dbReference type="InterPro" id="IPR045886">
    <property type="entry name" value="ThiF/MoeB/HesA"/>
</dbReference>
<dbReference type="InterPro" id="IPR000594">
    <property type="entry name" value="ThiF_NAD_FAD-bd"/>
</dbReference>
<dbReference type="InterPro" id="IPR035985">
    <property type="entry name" value="Ubiquitin-activating_enz"/>
</dbReference>
<dbReference type="PANTHER" id="PTHR10953:SF102">
    <property type="entry name" value="ADENYLYLTRANSFERASE AND SULFURTRANSFERASE MOCS3"/>
    <property type="match status" value="1"/>
</dbReference>
<dbReference type="PANTHER" id="PTHR10953">
    <property type="entry name" value="UBIQUITIN-ACTIVATING ENZYME E1"/>
    <property type="match status" value="1"/>
</dbReference>
<dbReference type="Pfam" id="PF00899">
    <property type="entry name" value="ThiF"/>
    <property type="match status" value="1"/>
</dbReference>
<dbReference type="SUPFAM" id="SSF69572">
    <property type="entry name" value="Activating enzymes of the ubiquitin-like proteins"/>
    <property type="match status" value="1"/>
</dbReference>
<proteinExistence type="inferred from homology"/>
<gene>
    <name type="primary">hesA</name>
    <name type="ordered locus">all1432</name>
</gene>
<accession>P18500</accession>
<comment type="function">
    <text>May be required for efficient nitrogen fixation.</text>
</comment>
<comment type="similarity">
    <text evidence="1">Belongs to the HesA/MoeB/ThiF family.</text>
</comment>
<sequence length="252" mass="27676">MMLPNFGEAAQKRLKSATVLVTGVGGLGGTAALYLAVAGVGRLILVRGGDLRLDDMNRQVLMTDDWVGKPRVFKAKETLQAINPDIQIETIHDYITSENVDSLVQSADMALDCAHNFTERDLLNSACVRWRKPMVEAAMDGMEAYLTTIIPGVTPCLSCIFPEKPDWDRRGFSVLGAVSGTLACLTALEAIKLITGFSQPLLSQLLTIDLNRMEFAKRRLYRDRSCPVCGNDAPWRYAQSNSMETSSNCTHS</sequence>
<protein>
    <recommendedName>
        <fullName>Protein HesA</fullName>
    </recommendedName>
</protein>
<name>HESA_NOSS1</name>
<keyword id="KW-0535">Nitrogen fixation</keyword>
<keyword id="KW-1185">Reference proteome</keyword>
<evidence type="ECO:0000305" key="1"/>
<organism>
    <name type="scientific">Nostoc sp. (strain PCC 7120 / SAG 25.82 / UTEX 2576)</name>
    <dbReference type="NCBI Taxonomy" id="103690"/>
    <lineage>
        <taxon>Bacteria</taxon>
        <taxon>Bacillati</taxon>
        <taxon>Cyanobacteriota</taxon>
        <taxon>Cyanophyceae</taxon>
        <taxon>Nostocales</taxon>
        <taxon>Nostocaceae</taxon>
        <taxon>Nostoc</taxon>
    </lineage>
</organism>
<reference key="1">
    <citation type="journal article" date="1990" name="Mol. Gen. Genet.">
        <title>Expression, nucleotide sequence and mutational analysis of two open reading frames in the nif gene region of Anabaena sp. strain PCC7120.</title>
        <authorList>
            <person name="Borthakur D."/>
            <person name="Basche M."/>
            <person name="Buikema W.J."/>
            <person name="Borthakur P.B."/>
            <person name="Haselkorn R."/>
        </authorList>
    </citation>
    <scope>NUCLEOTIDE SEQUENCE [GENOMIC DNA]</scope>
</reference>
<reference key="2">
    <citation type="journal article" date="2001" name="DNA Res.">
        <title>Complete genomic sequence of the filamentous nitrogen-fixing cyanobacterium Anabaena sp. strain PCC 7120.</title>
        <authorList>
            <person name="Kaneko T."/>
            <person name="Nakamura Y."/>
            <person name="Wolk C.P."/>
            <person name="Kuritz T."/>
            <person name="Sasamoto S."/>
            <person name="Watanabe A."/>
            <person name="Iriguchi M."/>
            <person name="Ishikawa A."/>
            <person name="Kawashima K."/>
            <person name="Kimura T."/>
            <person name="Kishida Y."/>
            <person name="Kohara M."/>
            <person name="Matsumoto M."/>
            <person name="Matsuno A."/>
            <person name="Muraki A."/>
            <person name="Nakazaki N."/>
            <person name="Shimpo S."/>
            <person name="Sugimoto M."/>
            <person name="Takazawa M."/>
            <person name="Yamada M."/>
            <person name="Yasuda M."/>
            <person name="Tabata S."/>
        </authorList>
    </citation>
    <scope>NUCLEOTIDE SEQUENCE [LARGE SCALE GENOMIC DNA]</scope>
    <source>
        <strain>PCC 7120 / SAG 25.82 / UTEX 2576</strain>
    </source>
</reference>